<organism>
    <name type="scientific">Staphylococcus aureus (strain Mu50 / ATCC 700699)</name>
    <dbReference type="NCBI Taxonomy" id="158878"/>
    <lineage>
        <taxon>Bacteria</taxon>
        <taxon>Bacillati</taxon>
        <taxon>Bacillota</taxon>
        <taxon>Bacilli</taxon>
        <taxon>Bacillales</taxon>
        <taxon>Staphylococcaceae</taxon>
        <taxon>Staphylococcus</taxon>
    </lineage>
</organism>
<sequence length="329" mass="35196">MFSLSFIVIAVIIIVALLILFSFVPIGLWISALAAGVHVGIGTLVGMRLRRVSPRKVIAPLIKAHKAGLALTTNQLESHYLAGGNVDRVVDANIAAQRADIDLPFERAAAIDLAGRDVLEAVQMSVNPKVIETPFIAGVAMNGIEVKAKARITVRANIARLVGGAGEETIIARVGEGIVSTIGSSKHHTEVLENPDNISKTVLSKGLDSGTAFEILSIDIADVDISKNIGADLQTEQALADKNIAQAKAEERRAMAVATEQEMKARVQEMHAKVVEAESEVPLAMAEALRSGNISVKDYYNLKNIEADTGMRNAINKRTDQSDDESPEH</sequence>
<proteinExistence type="inferred from homology"/>
<keyword id="KW-1003">Cell membrane</keyword>
<keyword id="KW-0472">Membrane</keyword>
<keyword id="KW-0812">Transmembrane</keyword>
<keyword id="KW-1133">Transmembrane helix</keyword>
<accession>Q99TS3</accession>
<evidence type="ECO:0000255" key="1">
    <source>
        <dbReference type="HAMAP-Rule" id="MF_01562"/>
    </source>
</evidence>
<name>FLOA_STAAM</name>
<feature type="chain" id="PRO_0000232563" description="Flotillin-like protein FloA">
    <location>
        <begin position="1"/>
        <end position="329"/>
    </location>
</feature>
<feature type="transmembrane region" description="Helical" evidence="1">
    <location>
        <begin position="6"/>
        <end position="26"/>
    </location>
</feature>
<feature type="transmembrane region" description="Helical" evidence="1">
    <location>
        <begin position="27"/>
        <end position="47"/>
    </location>
</feature>
<reference key="1">
    <citation type="journal article" date="2001" name="Lancet">
        <title>Whole genome sequencing of meticillin-resistant Staphylococcus aureus.</title>
        <authorList>
            <person name="Kuroda M."/>
            <person name="Ohta T."/>
            <person name="Uchiyama I."/>
            <person name="Baba T."/>
            <person name="Yuzawa H."/>
            <person name="Kobayashi I."/>
            <person name="Cui L."/>
            <person name="Oguchi A."/>
            <person name="Aoki K."/>
            <person name="Nagai Y."/>
            <person name="Lian J.-Q."/>
            <person name="Ito T."/>
            <person name="Kanamori M."/>
            <person name="Matsumaru H."/>
            <person name="Maruyama A."/>
            <person name="Murakami H."/>
            <person name="Hosoyama A."/>
            <person name="Mizutani-Ui Y."/>
            <person name="Takahashi N.K."/>
            <person name="Sawano T."/>
            <person name="Inoue R."/>
            <person name="Kaito C."/>
            <person name="Sekimizu K."/>
            <person name="Hirakawa H."/>
            <person name="Kuhara S."/>
            <person name="Goto S."/>
            <person name="Yabuzaki J."/>
            <person name="Kanehisa M."/>
            <person name="Yamashita A."/>
            <person name="Oshima K."/>
            <person name="Furuya K."/>
            <person name="Yoshino C."/>
            <person name="Shiba T."/>
            <person name="Hattori M."/>
            <person name="Ogasawara N."/>
            <person name="Hayashi H."/>
            <person name="Hiramatsu K."/>
        </authorList>
    </citation>
    <scope>NUCLEOTIDE SEQUENCE [LARGE SCALE GENOMIC DNA]</scope>
    <source>
        <strain>Mu50 / ATCC 700699</strain>
    </source>
</reference>
<dbReference type="EMBL" id="BA000017">
    <property type="protein sequence ID" value="BAB57735.1"/>
    <property type="molecule type" value="Genomic_DNA"/>
</dbReference>
<dbReference type="RefSeq" id="WP_000492108.1">
    <property type="nucleotide sequence ID" value="NC_002758.2"/>
</dbReference>
<dbReference type="SMR" id="Q99TS3"/>
<dbReference type="DNASU" id="1121548"/>
<dbReference type="KEGG" id="sav:SAV1573"/>
<dbReference type="HOGENOM" id="CLU_836378_0_0_9"/>
<dbReference type="PhylomeDB" id="Q99TS3"/>
<dbReference type="Proteomes" id="UP000002481">
    <property type="component" value="Chromosome"/>
</dbReference>
<dbReference type="GO" id="GO:0045121">
    <property type="term" value="C:membrane raft"/>
    <property type="evidence" value="ECO:0007669"/>
    <property type="project" value="UniProtKB-SubCell"/>
</dbReference>
<dbReference type="GO" id="GO:0005886">
    <property type="term" value="C:plasma membrane"/>
    <property type="evidence" value="ECO:0007669"/>
    <property type="project" value="UniProtKB-SubCell"/>
</dbReference>
<dbReference type="HAMAP" id="MF_01562">
    <property type="entry name" value="FloA"/>
    <property type="match status" value="1"/>
</dbReference>
<dbReference type="InterPro" id="IPR022853">
    <property type="entry name" value="FloA"/>
</dbReference>
<dbReference type="NCBIfam" id="NF010186">
    <property type="entry name" value="PRK13665.1"/>
    <property type="match status" value="1"/>
</dbReference>
<dbReference type="Pfam" id="PF12127">
    <property type="entry name" value="FloA"/>
    <property type="match status" value="1"/>
</dbReference>
<gene>
    <name evidence="1" type="primary">floA</name>
    <name type="ordered locus">SAV1573</name>
</gene>
<comment type="function">
    <text evidence="1">Found in functional membrane microdomains (FMM) that may be equivalent to eukaryotic membrane rafts. FMMs are highly dynamic and increase in number as cells age. Flotillins are thought to be important factors in membrane fluidity.</text>
</comment>
<comment type="subunit">
    <text evidence="1">Homooligomerizes.</text>
</comment>
<comment type="subcellular location">
    <subcellularLocation>
        <location evidence="1">Cell membrane</location>
        <topology evidence="1">Multi-pass membrane protein</topology>
    </subcellularLocation>
    <subcellularLocation>
        <location evidence="1">Membrane raft</location>
        <topology evidence="1">Multi-pass membrane protein</topology>
    </subcellularLocation>
</comment>
<comment type="similarity">
    <text evidence="1">Belongs to the flotillin-like FloA family.</text>
</comment>
<protein>
    <recommendedName>
        <fullName evidence="1">Flotillin-like protein FloA</fullName>
    </recommendedName>
</protein>